<protein>
    <recommendedName>
        <fullName evidence="1">Alkanesulfonate monooxygenase</fullName>
        <ecNumber evidence="1">1.14.14.5</ecNumber>
    </recommendedName>
    <alternativeName>
        <fullName evidence="1">FMNH2-dependent aliphatic sulfonate monooxygenase</fullName>
    </alternativeName>
</protein>
<keyword id="KW-0285">Flavoprotein</keyword>
<keyword id="KW-0288">FMN</keyword>
<keyword id="KW-0503">Monooxygenase</keyword>
<keyword id="KW-0560">Oxidoreductase</keyword>
<gene>
    <name evidence="1" type="primary">ssuD</name>
    <name type="ordered locus">UTI89_C1007</name>
</gene>
<proteinExistence type="inferred from homology"/>
<reference key="1">
    <citation type="journal article" date="2006" name="Proc. Natl. Acad. Sci. U.S.A.">
        <title>Identification of genes subject to positive selection in uropathogenic strains of Escherichia coli: a comparative genomics approach.</title>
        <authorList>
            <person name="Chen S.L."/>
            <person name="Hung C.-S."/>
            <person name="Xu J."/>
            <person name="Reigstad C.S."/>
            <person name="Magrini V."/>
            <person name="Sabo A."/>
            <person name="Blasiar D."/>
            <person name="Bieri T."/>
            <person name="Meyer R.R."/>
            <person name="Ozersky P."/>
            <person name="Armstrong J.R."/>
            <person name="Fulton R.S."/>
            <person name="Latreille J.P."/>
            <person name="Spieth J."/>
            <person name="Hooton T.M."/>
            <person name="Mardis E.R."/>
            <person name="Hultgren S.J."/>
            <person name="Gordon J.I."/>
        </authorList>
    </citation>
    <scope>NUCLEOTIDE SEQUENCE [LARGE SCALE GENOMIC DNA]</scope>
    <source>
        <strain>UTI89 / UPEC</strain>
    </source>
</reference>
<organism>
    <name type="scientific">Escherichia coli (strain UTI89 / UPEC)</name>
    <dbReference type="NCBI Taxonomy" id="364106"/>
    <lineage>
        <taxon>Bacteria</taxon>
        <taxon>Pseudomonadati</taxon>
        <taxon>Pseudomonadota</taxon>
        <taxon>Gammaproteobacteria</taxon>
        <taxon>Enterobacterales</taxon>
        <taxon>Enterobacteriaceae</taxon>
        <taxon>Escherichia</taxon>
    </lineage>
</organism>
<feature type="chain" id="PRO_1000066823" description="Alkanesulfonate monooxygenase">
    <location>
        <begin position="1"/>
        <end position="381"/>
    </location>
</feature>
<comment type="function">
    <text evidence="1">Catalyzes the desulfonation of aliphatic sulfonates.</text>
</comment>
<comment type="catalytic activity">
    <reaction evidence="1">
        <text>an alkanesulfonate + FMNH2 + O2 = an aldehyde + FMN + sulfite + H2O + 2 H(+)</text>
        <dbReference type="Rhea" id="RHEA:23064"/>
        <dbReference type="ChEBI" id="CHEBI:15377"/>
        <dbReference type="ChEBI" id="CHEBI:15378"/>
        <dbReference type="ChEBI" id="CHEBI:15379"/>
        <dbReference type="ChEBI" id="CHEBI:17359"/>
        <dbReference type="ChEBI" id="CHEBI:17478"/>
        <dbReference type="ChEBI" id="CHEBI:57618"/>
        <dbReference type="ChEBI" id="CHEBI:58210"/>
        <dbReference type="ChEBI" id="CHEBI:134249"/>
        <dbReference type="EC" id="1.14.14.5"/>
    </reaction>
</comment>
<comment type="subunit">
    <text evidence="1">Homotetramer.</text>
</comment>
<comment type="miscellaneous">
    <text evidence="1">FMNH(2) which is absolutely required for this enzymatic reaction, is provided by SsuE.</text>
</comment>
<comment type="similarity">
    <text evidence="1">Belongs to the SsuD family.</text>
</comment>
<sequence>MSLNMFWFLPTHGDGHYLGTEEGSRPVDHGYLQQIAQAADRLGYTGVLIPTGRSCEDAWLVAASMIPVTQRLKFLVALRPSVTSPTVAARQAATLDRLSNGRALFNLVTGSDPQELAGDGVFLDHSERYEASAEFTQVWRRLLLGETVDFNGKHIHVRGAKLLFPPIQQPYPPLYFGGSSDVAQELAAEQVDLYLTWGEPPELVKEKIEHVRAKAAAHGRKIRFGVRLHVIVRETNDEAWQAAERLISRLDDETIAKAQAAFARTDSVGQQRMAALHNGKRDNLEISPNLWAGVGLVRGGAGTALVGDGPTVAARINEYAALGIDSFVLSGYPHLEEAYRVGELLFPHLDVAIPEIPQPQPLNPQGEAVANDFIPRNVAQS</sequence>
<dbReference type="EC" id="1.14.14.5" evidence="1"/>
<dbReference type="EMBL" id="CP000243">
    <property type="protein sequence ID" value="ABE06492.1"/>
    <property type="molecule type" value="Genomic_DNA"/>
</dbReference>
<dbReference type="RefSeq" id="WP_000055976.1">
    <property type="nucleotide sequence ID" value="NZ_CP064825.1"/>
</dbReference>
<dbReference type="SMR" id="Q1RDS2"/>
<dbReference type="KEGG" id="eci:UTI89_C1007"/>
<dbReference type="HOGENOM" id="CLU_027853_1_0_6"/>
<dbReference type="Proteomes" id="UP000001952">
    <property type="component" value="Chromosome"/>
</dbReference>
<dbReference type="GO" id="GO:0008726">
    <property type="term" value="F:alkanesulfonate monooxygenase activity"/>
    <property type="evidence" value="ECO:0007669"/>
    <property type="project" value="UniProtKB-UniRule"/>
</dbReference>
<dbReference type="GO" id="GO:0046306">
    <property type="term" value="P:alkanesulfonate catabolic process"/>
    <property type="evidence" value="ECO:0007669"/>
    <property type="project" value="TreeGrafter"/>
</dbReference>
<dbReference type="CDD" id="cd01094">
    <property type="entry name" value="Alkanesulfonate_monoxygenase"/>
    <property type="match status" value="1"/>
</dbReference>
<dbReference type="FunFam" id="3.20.20.30:FF:000001">
    <property type="entry name" value="Alkanesulfonate monooxygenase"/>
    <property type="match status" value="1"/>
</dbReference>
<dbReference type="Gene3D" id="3.20.20.30">
    <property type="entry name" value="Luciferase-like domain"/>
    <property type="match status" value="1"/>
</dbReference>
<dbReference type="HAMAP" id="MF_01229">
    <property type="entry name" value="Alkanesulf_monooxygen"/>
    <property type="match status" value="1"/>
</dbReference>
<dbReference type="InterPro" id="IPR019911">
    <property type="entry name" value="Alkanesulphonate_mOase_FMN-dep"/>
</dbReference>
<dbReference type="InterPro" id="IPR011251">
    <property type="entry name" value="Luciferase-like_dom"/>
</dbReference>
<dbReference type="InterPro" id="IPR036661">
    <property type="entry name" value="Luciferase-like_sf"/>
</dbReference>
<dbReference type="InterPro" id="IPR050172">
    <property type="entry name" value="SsuD_RutA_monooxygenase"/>
</dbReference>
<dbReference type="NCBIfam" id="TIGR03565">
    <property type="entry name" value="alk_sulf_monoox"/>
    <property type="match status" value="1"/>
</dbReference>
<dbReference type="NCBIfam" id="NF001939">
    <property type="entry name" value="PRK00719.1"/>
    <property type="match status" value="1"/>
</dbReference>
<dbReference type="PANTHER" id="PTHR42847">
    <property type="entry name" value="ALKANESULFONATE MONOOXYGENASE"/>
    <property type="match status" value="1"/>
</dbReference>
<dbReference type="PANTHER" id="PTHR42847:SF4">
    <property type="entry name" value="ALKANESULFONATE MONOOXYGENASE-RELATED"/>
    <property type="match status" value="1"/>
</dbReference>
<dbReference type="Pfam" id="PF00296">
    <property type="entry name" value="Bac_luciferase"/>
    <property type="match status" value="1"/>
</dbReference>
<dbReference type="SUPFAM" id="SSF51679">
    <property type="entry name" value="Bacterial luciferase-like"/>
    <property type="match status" value="1"/>
</dbReference>
<name>SSUD_ECOUT</name>
<evidence type="ECO:0000255" key="1">
    <source>
        <dbReference type="HAMAP-Rule" id="MF_01229"/>
    </source>
</evidence>
<accession>Q1RDS2</accession>